<keyword id="KW-1185">Reference proteome</keyword>
<keyword id="KW-1277">Toxin-antitoxin system</keyword>
<feature type="chain" id="PRO_0000427395" description="Putative antitoxin VapB10">
    <location>
        <begin position="1"/>
        <end position="85"/>
    </location>
</feature>
<feature type="region of interest" description="Disordered" evidence="2">
    <location>
        <begin position="64"/>
        <end position="85"/>
    </location>
</feature>
<feature type="compositionally biased region" description="Basic and acidic residues" evidence="2">
    <location>
        <begin position="64"/>
        <end position="76"/>
    </location>
</feature>
<organism>
    <name type="scientific">Mycobacterium tuberculosis (strain CDC 1551 / Oshkosh)</name>
    <dbReference type="NCBI Taxonomy" id="83331"/>
    <lineage>
        <taxon>Bacteria</taxon>
        <taxon>Bacillati</taxon>
        <taxon>Actinomycetota</taxon>
        <taxon>Actinomycetes</taxon>
        <taxon>Mycobacteriales</taxon>
        <taxon>Mycobacteriaceae</taxon>
        <taxon>Mycobacterium</taxon>
        <taxon>Mycobacterium tuberculosis complex</taxon>
    </lineage>
</organism>
<reference key="1">
    <citation type="journal article" date="2002" name="J. Bacteriol.">
        <title>Whole-genome comparison of Mycobacterium tuberculosis clinical and laboratory strains.</title>
        <authorList>
            <person name="Fleischmann R.D."/>
            <person name="Alland D."/>
            <person name="Eisen J.A."/>
            <person name="Carpenter L."/>
            <person name="White O."/>
            <person name="Peterson J.D."/>
            <person name="DeBoy R.T."/>
            <person name="Dodson R.J."/>
            <person name="Gwinn M.L."/>
            <person name="Haft D.H."/>
            <person name="Hickey E.K."/>
            <person name="Kolonay J.F."/>
            <person name="Nelson W.C."/>
            <person name="Umayam L.A."/>
            <person name="Ermolaeva M.D."/>
            <person name="Salzberg S.L."/>
            <person name="Delcher A."/>
            <person name="Utterback T.R."/>
            <person name="Weidman J.F."/>
            <person name="Khouri H.M."/>
            <person name="Gill J."/>
            <person name="Mikula A."/>
            <person name="Bishai W."/>
            <person name="Jacobs W.R. Jr."/>
            <person name="Venter J.C."/>
            <person name="Fraser C.M."/>
        </authorList>
    </citation>
    <scope>NUCLEOTIDE SEQUENCE [LARGE SCALE GENOMIC DNA]</scope>
    <source>
        <strain>CDC 1551 / Oshkosh</strain>
    </source>
</reference>
<protein>
    <recommendedName>
        <fullName>Putative antitoxin VapB10</fullName>
    </recommendedName>
</protein>
<accession>P9WLZ0</accession>
<accession>L0T6R3</accession>
<accession>P64835</accession>
<accession>P71666</accession>
<name>VPB10_MYCTO</name>
<evidence type="ECO:0000250" key="1"/>
<evidence type="ECO:0000256" key="2">
    <source>
        <dbReference type="SAM" id="MobiDB-lite"/>
    </source>
</evidence>
<evidence type="ECO:0000305" key="3"/>
<sequence>MKRTNIYLDEEQTASLDKLAAQEGVSRAELIRLLLNRALTTAGDDLASDLQAINDSFGTLRHLDPPVRRSGGREQHLAQVWRATS</sequence>
<gene>
    <name type="primary">vapB10</name>
    <name type="ordered locus">MT1442</name>
</gene>
<dbReference type="EMBL" id="AE000516">
    <property type="protein sequence ID" value="AAK45707.1"/>
    <property type="status" value="ALT_INIT"/>
    <property type="molecule type" value="Genomic_DNA"/>
</dbReference>
<dbReference type="PIR" id="C70900">
    <property type="entry name" value="C70900"/>
</dbReference>
<dbReference type="RefSeq" id="WP_003407272.1">
    <property type="nucleotide sequence ID" value="NZ_KK341227.1"/>
</dbReference>
<dbReference type="SMR" id="P9WLZ0"/>
<dbReference type="KEGG" id="mtc:MT1442"/>
<dbReference type="PATRIC" id="fig|83331.31.peg.1550"/>
<dbReference type="HOGENOM" id="CLU_192216_0_0_11"/>
<dbReference type="Proteomes" id="UP000001020">
    <property type="component" value="Chromosome"/>
</dbReference>
<dbReference type="GO" id="GO:0006355">
    <property type="term" value="P:regulation of DNA-templated transcription"/>
    <property type="evidence" value="ECO:0007669"/>
    <property type="project" value="InterPro"/>
</dbReference>
<dbReference type="CDD" id="cd21631">
    <property type="entry name" value="RHH_CopG_NikR-like"/>
    <property type="match status" value="1"/>
</dbReference>
<dbReference type="Gene3D" id="1.10.1220.10">
    <property type="entry name" value="Met repressor-like"/>
    <property type="match status" value="1"/>
</dbReference>
<dbReference type="InterPro" id="IPR013321">
    <property type="entry name" value="Arc_rbn_hlx_hlx"/>
</dbReference>
<dbReference type="InterPro" id="IPR002145">
    <property type="entry name" value="CopG"/>
</dbReference>
<dbReference type="InterPro" id="IPR010985">
    <property type="entry name" value="Ribbon_hlx_hlx"/>
</dbReference>
<dbReference type="Pfam" id="PF01402">
    <property type="entry name" value="RHH_1"/>
    <property type="match status" value="1"/>
</dbReference>
<dbReference type="SUPFAM" id="SSF47598">
    <property type="entry name" value="Ribbon-helix-helix"/>
    <property type="match status" value="1"/>
</dbReference>
<proteinExistence type="inferred from homology"/>
<comment type="function">
    <text evidence="1">Putative antitoxin component of a possible type II toxin-antitoxin (TA) system. The cognate toxin is VapC10 (By similarity).</text>
</comment>
<comment type="sequence caution" evidence="3">
    <conflict type="erroneous initiation">
        <sequence resource="EMBL-CDS" id="AAK45707"/>
    </conflict>
    <text>Extended N-terminus.</text>
</comment>